<accession>A5V3U9</accession>
<reference key="1">
    <citation type="journal article" date="2010" name="J. Bacteriol.">
        <title>Genome sequence of the dioxin-mineralizing bacterium Sphingomonas wittichii RW1.</title>
        <authorList>
            <person name="Miller T.R."/>
            <person name="Delcher A.L."/>
            <person name="Salzberg S.L."/>
            <person name="Saunders E."/>
            <person name="Detter J.C."/>
            <person name="Halden R.U."/>
        </authorList>
    </citation>
    <scope>NUCLEOTIDE SEQUENCE [LARGE SCALE GENOMIC DNA]</scope>
    <source>
        <strain>DSM 6014 / CCUG 31198 / JCM 15750 / NBRC 105917 / EY 4224 / RW1</strain>
    </source>
</reference>
<name>GATB_RHIWR</name>
<comment type="function">
    <text evidence="1">Allows the formation of correctly charged Asn-tRNA(Asn) or Gln-tRNA(Gln) through the transamidation of misacylated Asp-tRNA(Asn) or Glu-tRNA(Gln) in organisms which lack either or both of asparaginyl-tRNA or glutaminyl-tRNA synthetases. The reaction takes place in the presence of glutamine and ATP through an activated phospho-Asp-tRNA(Asn) or phospho-Glu-tRNA(Gln).</text>
</comment>
<comment type="catalytic activity">
    <reaction evidence="1">
        <text>L-glutamyl-tRNA(Gln) + L-glutamine + ATP + H2O = L-glutaminyl-tRNA(Gln) + L-glutamate + ADP + phosphate + H(+)</text>
        <dbReference type="Rhea" id="RHEA:17521"/>
        <dbReference type="Rhea" id="RHEA-COMP:9681"/>
        <dbReference type="Rhea" id="RHEA-COMP:9684"/>
        <dbReference type="ChEBI" id="CHEBI:15377"/>
        <dbReference type="ChEBI" id="CHEBI:15378"/>
        <dbReference type="ChEBI" id="CHEBI:29985"/>
        <dbReference type="ChEBI" id="CHEBI:30616"/>
        <dbReference type="ChEBI" id="CHEBI:43474"/>
        <dbReference type="ChEBI" id="CHEBI:58359"/>
        <dbReference type="ChEBI" id="CHEBI:78520"/>
        <dbReference type="ChEBI" id="CHEBI:78521"/>
        <dbReference type="ChEBI" id="CHEBI:456216"/>
    </reaction>
</comment>
<comment type="catalytic activity">
    <reaction evidence="1">
        <text>L-aspartyl-tRNA(Asn) + L-glutamine + ATP + H2O = L-asparaginyl-tRNA(Asn) + L-glutamate + ADP + phosphate + 2 H(+)</text>
        <dbReference type="Rhea" id="RHEA:14513"/>
        <dbReference type="Rhea" id="RHEA-COMP:9674"/>
        <dbReference type="Rhea" id="RHEA-COMP:9677"/>
        <dbReference type="ChEBI" id="CHEBI:15377"/>
        <dbReference type="ChEBI" id="CHEBI:15378"/>
        <dbReference type="ChEBI" id="CHEBI:29985"/>
        <dbReference type="ChEBI" id="CHEBI:30616"/>
        <dbReference type="ChEBI" id="CHEBI:43474"/>
        <dbReference type="ChEBI" id="CHEBI:58359"/>
        <dbReference type="ChEBI" id="CHEBI:78515"/>
        <dbReference type="ChEBI" id="CHEBI:78516"/>
        <dbReference type="ChEBI" id="CHEBI:456216"/>
    </reaction>
</comment>
<comment type="subunit">
    <text evidence="1">Heterotrimer of A, B and C subunits.</text>
</comment>
<comment type="similarity">
    <text evidence="1">Belongs to the GatB/GatE family. GatB subfamily.</text>
</comment>
<organism>
    <name type="scientific">Rhizorhabdus wittichii (strain DSM 6014 / CCUG 31198 / JCM 15750 / NBRC 105917 / EY 4224 / RW1)</name>
    <name type="common">Sphingomonas wittichii</name>
    <dbReference type="NCBI Taxonomy" id="392499"/>
    <lineage>
        <taxon>Bacteria</taxon>
        <taxon>Pseudomonadati</taxon>
        <taxon>Pseudomonadota</taxon>
        <taxon>Alphaproteobacteria</taxon>
        <taxon>Sphingomonadales</taxon>
        <taxon>Sphingomonadaceae</taxon>
        <taxon>Rhizorhabdus</taxon>
    </lineage>
</organism>
<keyword id="KW-0067">ATP-binding</keyword>
<keyword id="KW-0436">Ligase</keyword>
<keyword id="KW-0547">Nucleotide-binding</keyword>
<keyword id="KW-0648">Protein biosynthesis</keyword>
<keyword id="KW-1185">Reference proteome</keyword>
<evidence type="ECO:0000255" key="1">
    <source>
        <dbReference type="HAMAP-Rule" id="MF_00121"/>
    </source>
</evidence>
<proteinExistence type="inferred from homology"/>
<protein>
    <recommendedName>
        <fullName evidence="1">Aspartyl/glutamyl-tRNA(Asn/Gln) amidotransferase subunit B</fullName>
        <shortName evidence="1">Asp/Glu-ADT subunit B</shortName>
        <ecNumber evidence="1">6.3.5.-</ecNumber>
    </recommendedName>
</protein>
<feature type="chain" id="PRO_1000016040" description="Aspartyl/glutamyl-tRNA(Asn/Gln) amidotransferase subunit B">
    <location>
        <begin position="1"/>
        <end position="494"/>
    </location>
</feature>
<sequence length="494" mass="53719">MSSYRIQGATGEWEVVIGLEVHAQVVSNAKLFSGASAAFGAEPNQSVSLVDAAMPGMLPVPNEECIRQAVKTGMALGAEINRWSRFDRKNYFYADLPQGYQISQLYHPLVGEGTITIDADEKAGIAEARTIGVERLHVEQDAGKLMHDQHPTRSYVDLNRSGVALMEIVSKPDMRSPSEAGAYLRKLRSILRYVGSCDGNMEEGSMRADVNVSVRKAGDPFGTRTETKNVNSIRFVMAAIESEANRQVDVIEGGGKIVQETRLYDPDRNETRSMRSKEDAHDYRYFPDPDLLPLELSEEFVAQCRAELPELPDAKRARYEGELGLPAYNAAVLTSDVETARWFEALLDAAGKPGAEVARAASNWLISDLFGALNRLGKAIDESPVSPRQGAELLALVADGTLSGTLAKQVFEIMLETGDDPARIVEERGLKQTSDTGAIEAVIAEVMAANADKVAEYRGGKDKLFGFFVGQTMKAMGGKANPGVVNELLKKTLG</sequence>
<gene>
    <name evidence="1" type="primary">gatB</name>
    <name type="ordered locus">Swit_0597</name>
</gene>
<dbReference type="EC" id="6.3.5.-" evidence="1"/>
<dbReference type="EMBL" id="CP000699">
    <property type="protein sequence ID" value="ABQ66965.1"/>
    <property type="molecule type" value="Genomic_DNA"/>
</dbReference>
<dbReference type="SMR" id="A5V3U9"/>
<dbReference type="STRING" id="392499.Swit_0597"/>
<dbReference type="PaxDb" id="392499-Swit_0597"/>
<dbReference type="KEGG" id="swi:Swit_0597"/>
<dbReference type="eggNOG" id="COG0064">
    <property type="taxonomic scope" value="Bacteria"/>
</dbReference>
<dbReference type="HOGENOM" id="CLU_019240_0_0_5"/>
<dbReference type="OrthoDB" id="9804078at2"/>
<dbReference type="Proteomes" id="UP000001989">
    <property type="component" value="Chromosome"/>
</dbReference>
<dbReference type="GO" id="GO:0050566">
    <property type="term" value="F:asparaginyl-tRNA synthase (glutamine-hydrolyzing) activity"/>
    <property type="evidence" value="ECO:0007669"/>
    <property type="project" value="RHEA"/>
</dbReference>
<dbReference type="GO" id="GO:0005524">
    <property type="term" value="F:ATP binding"/>
    <property type="evidence" value="ECO:0007669"/>
    <property type="project" value="UniProtKB-KW"/>
</dbReference>
<dbReference type="GO" id="GO:0050567">
    <property type="term" value="F:glutaminyl-tRNA synthase (glutamine-hydrolyzing) activity"/>
    <property type="evidence" value="ECO:0007669"/>
    <property type="project" value="UniProtKB-UniRule"/>
</dbReference>
<dbReference type="GO" id="GO:0070681">
    <property type="term" value="P:glutaminyl-tRNAGln biosynthesis via transamidation"/>
    <property type="evidence" value="ECO:0007669"/>
    <property type="project" value="TreeGrafter"/>
</dbReference>
<dbReference type="GO" id="GO:0006412">
    <property type="term" value="P:translation"/>
    <property type="evidence" value="ECO:0007669"/>
    <property type="project" value="UniProtKB-UniRule"/>
</dbReference>
<dbReference type="FunFam" id="1.10.10.410:FF:000001">
    <property type="entry name" value="Aspartyl/glutamyl-tRNA(Asn/Gln) amidotransferase subunit B"/>
    <property type="match status" value="1"/>
</dbReference>
<dbReference type="Gene3D" id="1.10.10.410">
    <property type="match status" value="1"/>
</dbReference>
<dbReference type="Gene3D" id="1.10.150.380">
    <property type="entry name" value="GatB domain, N-terminal subdomain"/>
    <property type="match status" value="1"/>
</dbReference>
<dbReference type="HAMAP" id="MF_00121">
    <property type="entry name" value="GatB"/>
    <property type="match status" value="1"/>
</dbReference>
<dbReference type="InterPro" id="IPR017959">
    <property type="entry name" value="Asn/Gln-tRNA_amidoTrfase_suB/E"/>
</dbReference>
<dbReference type="InterPro" id="IPR006075">
    <property type="entry name" value="Asn/Gln-tRNA_Trfase_suB/E_cat"/>
</dbReference>
<dbReference type="InterPro" id="IPR018027">
    <property type="entry name" value="Asn/Gln_amidotransferase"/>
</dbReference>
<dbReference type="InterPro" id="IPR003789">
    <property type="entry name" value="Asn/Gln_tRNA_amidoTrase-B-like"/>
</dbReference>
<dbReference type="InterPro" id="IPR004413">
    <property type="entry name" value="GatB"/>
</dbReference>
<dbReference type="InterPro" id="IPR042114">
    <property type="entry name" value="GatB_C_1"/>
</dbReference>
<dbReference type="InterPro" id="IPR023168">
    <property type="entry name" value="GatB_Yqey_C_2"/>
</dbReference>
<dbReference type="InterPro" id="IPR017958">
    <property type="entry name" value="Gln-tRNA_amidoTrfase_suB_CS"/>
</dbReference>
<dbReference type="InterPro" id="IPR014746">
    <property type="entry name" value="Gln_synth/guanido_kin_cat_dom"/>
</dbReference>
<dbReference type="NCBIfam" id="TIGR00133">
    <property type="entry name" value="gatB"/>
    <property type="match status" value="1"/>
</dbReference>
<dbReference type="NCBIfam" id="NF004012">
    <property type="entry name" value="PRK05477.1-2"/>
    <property type="match status" value="1"/>
</dbReference>
<dbReference type="NCBIfam" id="NF004014">
    <property type="entry name" value="PRK05477.1-4"/>
    <property type="match status" value="1"/>
</dbReference>
<dbReference type="NCBIfam" id="NF004015">
    <property type="entry name" value="PRK05477.1-5"/>
    <property type="match status" value="1"/>
</dbReference>
<dbReference type="PANTHER" id="PTHR11659">
    <property type="entry name" value="GLUTAMYL-TRNA GLN AMIDOTRANSFERASE SUBUNIT B MITOCHONDRIAL AND PROKARYOTIC PET112-RELATED"/>
    <property type="match status" value="1"/>
</dbReference>
<dbReference type="PANTHER" id="PTHR11659:SF0">
    <property type="entry name" value="GLUTAMYL-TRNA(GLN) AMIDOTRANSFERASE SUBUNIT B, MITOCHONDRIAL"/>
    <property type="match status" value="1"/>
</dbReference>
<dbReference type="Pfam" id="PF02934">
    <property type="entry name" value="GatB_N"/>
    <property type="match status" value="1"/>
</dbReference>
<dbReference type="Pfam" id="PF02637">
    <property type="entry name" value="GatB_Yqey"/>
    <property type="match status" value="1"/>
</dbReference>
<dbReference type="SMART" id="SM00845">
    <property type="entry name" value="GatB_Yqey"/>
    <property type="match status" value="1"/>
</dbReference>
<dbReference type="SUPFAM" id="SSF89095">
    <property type="entry name" value="GatB/YqeY motif"/>
    <property type="match status" value="1"/>
</dbReference>
<dbReference type="SUPFAM" id="SSF55931">
    <property type="entry name" value="Glutamine synthetase/guanido kinase"/>
    <property type="match status" value="1"/>
</dbReference>
<dbReference type="PROSITE" id="PS01234">
    <property type="entry name" value="GATB"/>
    <property type="match status" value="1"/>
</dbReference>